<feature type="chain" id="PRO_0000446382" description="Sideroflexin-2">
    <location>
        <begin position="1"/>
        <end position="327"/>
    </location>
</feature>
<feature type="transmembrane region" description="Helical" evidence="1">
    <location>
        <begin position="99"/>
        <end position="119"/>
    </location>
</feature>
<feature type="transmembrane region" description="Helical" evidence="1">
    <location>
        <begin position="143"/>
        <end position="163"/>
    </location>
</feature>
<feature type="transmembrane region" description="Helical" evidence="1">
    <location>
        <begin position="175"/>
        <end position="195"/>
    </location>
</feature>
<feature type="transmembrane region" description="Helical" evidence="1">
    <location>
        <begin position="228"/>
        <end position="248"/>
    </location>
</feature>
<feature type="transmembrane region" description="Helical" evidence="1">
    <location>
        <begin position="267"/>
        <end position="287"/>
    </location>
</feature>
<feature type="sequence conflict" description="In Ref. 3; AAL48651." evidence="3" ref="3">
    <original>N</original>
    <variation>S</variation>
    <location>
        <position position="209"/>
    </location>
</feature>
<reference key="1">
    <citation type="journal article" date="2000" name="Science">
        <title>The genome sequence of Drosophila melanogaster.</title>
        <authorList>
            <person name="Adams M.D."/>
            <person name="Celniker S.E."/>
            <person name="Holt R.A."/>
            <person name="Evans C.A."/>
            <person name="Gocayne J.D."/>
            <person name="Amanatides P.G."/>
            <person name="Scherer S.E."/>
            <person name="Li P.W."/>
            <person name="Hoskins R.A."/>
            <person name="Galle R.F."/>
            <person name="George R.A."/>
            <person name="Lewis S.E."/>
            <person name="Richards S."/>
            <person name="Ashburner M."/>
            <person name="Henderson S.N."/>
            <person name="Sutton G.G."/>
            <person name="Wortman J.R."/>
            <person name="Yandell M.D."/>
            <person name="Zhang Q."/>
            <person name="Chen L.X."/>
            <person name="Brandon R.C."/>
            <person name="Rogers Y.-H.C."/>
            <person name="Blazej R.G."/>
            <person name="Champe M."/>
            <person name="Pfeiffer B.D."/>
            <person name="Wan K.H."/>
            <person name="Doyle C."/>
            <person name="Baxter E.G."/>
            <person name="Helt G."/>
            <person name="Nelson C.R."/>
            <person name="Miklos G.L.G."/>
            <person name="Abril J.F."/>
            <person name="Agbayani A."/>
            <person name="An H.-J."/>
            <person name="Andrews-Pfannkoch C."/>
            <person name="Baldwin D."/>
            <person name="Ballew R.M."/>
            <person name="Basu A."/>
            <person name="Baxendale J."/>
            <person name="Bayraktaroglu L."/>
            <person name="Beasley E.M."/>
            <person name="Beeson K.Y."/>
            <person name="Benos P.V."/>
            <person name="Berman B.P."/>
            <person name="Bhandari D."/>
            <person name="Bolshakov S."/>
            <person name="Borkova D."/>
            <person name="Botchan M.R."/>
            <person name="Bouck J."/>
            <person name="Brokstein P."/>
            <person name="Brottier P."/>
            <person name="Burtis K.C."/>
            <person name="Busam D.A."/>
            <person name="Butler H."/>
            <person name="Cadieu E."/>
            <person name="Center A."/>
            <person name="Chandra I."/>
            <person name="Cherry J.M."/>
            <person name="Cawley S."/>
            <person name="Dahlke C."/>
            <person name="Davenport L.B."/>
            <person name="Davies P."/>
            <person name="de Pablos B."/>
            <person name="Delcher A."/>
            <person name="Deng Z."/>
            <person name="Mays A.D."/>
            <person name="Dew I."/>
            <person name="Dietz S.M."/>
            <person name="Dodson K."/>
            <person name="Doup L.E."/>
            <person name="Downes M."/>
            <person name="Dugan-Rocha S."/>
            <person name="Dunkov B.C."/>
            <person name="Dunn P."/>
            <person name="Durbin K.J."/>
            <person name="Evangelista C.C."/>
            <person name="Ferraz C."/>
            <person name="Ferriera S."/>
            <person name="Fleischmann W."/>
            <person name="Fosler C."/>
            <person name="Gabrielian A.E."/>
            <person name="Garg N.S."/>
            <person name="Gelbart W.M."/>
            <person name="Glasser K."/>
            <person name="Glodek A."/>
            <person name="Gong F."/>
            <person name="Gorrell J.H."/>
            <person name="Gu Z."/>
            <person name="Guan P."/>
            <person name="Harris M."/>
            <person name="Harris N.L."/>
            <person name="Harvey D.A."/>
            <person name="Heiman T.J."/>
            <person name="Hernandez J.R."/>
            <person name="Houck J."/>
            <person name="Hostin D."/>
            <person name="Houston K.A."/>
            <person name="Howland T.J."/>
            <person name="Wei M.-H."/>
            <person name="Ibegwam C."/>
            <person name="Jalali M."/>
            <person name="Kalush F."/>
            <person name="Karpen G.H."/>
            <person name="Ke Z."/>
            <person name="Kennison J.A."/>
            <person name="Ketchum K.A."/>
            <person name="Kimmel B.E."/>
            <person name="Kodira C.D."/>
            <person name="Kraft C.L."/>
            <person name="Kravitz S."/>
            <person name="Kulp D."/>
            <person name="Lai Z."/>
            <person name="Lasko P."/>
            <person name="Lei Y."/>
            <person name="Levitsky A.A."/>
            <person name="Li J.H."/>
            <person name="Li Z."/>
            <person name="Liang Y."/>
            <person name="Lin X."/>
            <person name="Liu X."/>
            <person name="Mattei B."/>
            <person name="McIntosh T.C."/>
            <person name="McLeod M.P."/>
            <person name="McPherson D."/>
            <person name="Merkulov G."/>
            <person name="Milshina N.V."/>
            <person name="Mobarry C."/>
            <person name="Morris J."/>
            <person name="Moshrefi A."/>
            <person name="Mount S.M."/>
            <person name="Moy M."/>
            <person name="Murphy B."/>
            <person name="Murphy L."/>
            <person name="Muzny D.M."/>
            <person name="Nelson D.L."/>
            <person name="Nelson D.R."/>
            <person name="Nelson K.A."/>
            <person name="Nixon K."/>
            <person name="Nusskern D.R."/>
            <person name="Pacleb J.M."/>
            <person name="Palazzolo M."/>
            <person name="Pittman G.S."/>
            <person name="Pan S."/>
            <person name="Pollard J."/>
            <person name="Puri V."/>
            <person name="Reese M.G."/>
            <person name="Reinert K."/>
            <person name="Remington K."/>
            <person name="Saunders R.D.C."/>
            <person name="Scheeler F."/>
            <person name="Shen H."/>
            <person name="Shue B.C."/>
            <person name="Siden-Kiamos I."/>
            <person name="Simpson M."/>
            <person name="Skupski M.P."/>
            <person name="Smith T.J."/>
            <person name="Spier E."/>
            <person name="Spradling A.C."/>
            <person name="Stapleton M."/>
            <person name="Strong R."/>
            <person name="Sun E."/>
            <person name="Svirskas R."/>
            <person name="Tector C."/>
            <person name="Turner R."/>
            <person name="Venter E."/>
            <person name="Wang A.H."/>
            <person name="Wang X."/>
            <person name="Wang Z.-Y."/>
            <person name="Wassarman D.A."/>
            <person name="Weinstock G.M."/>
            <person name="Weissenbach J."/>
            <person name="Williams S.M."/>
            <person name="Woodage T."/>
            <person name="Worley K.C."/>
            <person name="Wu D."/>
            <person name="Yang S."/>
            <person name="Yao Q.A."/>
            <person name="Ye J."/>
            <person name="Yeh R.-F."/>
            <person name="Zaveri J.S."/>
            <person name="Zhan M."/>
            <person name="Zhang G."/>
            <person name="Zhao Q."/>
            <person name="Zheng L."/>
            <person name="Zheng X.H."/>
            <person name="Zhong F.N."/>
            <person name="Zhong W."/>
            <person name="Zhou X."/>
            <person name="Zhu S.C."/>
            <person name="Zhu X."/>
            <person name="Smith H.O."/>
            <person name="Gibbs R.A."/>
            <person name="Myers E.W."/>
            <person name="Rubin G.M."/>
            <person name="Venter J.C."/>
        </authorList>
    </citation>
    <scope>NUCLEOTIDE SEQUENCE [LARGE SCALE GENOMIC DNA]</scope>
    <source>
        <strain>Berkeley</strain>
    </source>
</reference>
<reference key="2">
    <citation type="journal article" date="2002" name="Genome Biol.">
        <title>Annotation of the Drosophila melanogaster euchromatic genome: a systematic review.</title>
        <authorList>
            <person name="Misra S."/>
            <person name="Crosby M.A."/>
            <person name="Mungall C.J."/>
            <person name="Matthews B.B."/>
            <person name="Campbell K.S."/>
            <person name="Hradecky P."/>
            <person name="Huang Y."/>
            <person name="Kaminker J.S."/>
            <person name="Millburn G.H."/>
            <person name="Prochnik S.E."/>
            <person name="Smith C.D."/>
            <person name="Tupy J.L."/>
            <person name="Whitfield E.J."/>
            <person name="Bayraktaroglu L."/>
            <person name="Berman B.P."/>
            <person name="Bettencourt B.R."/>
            <person name="Celniker S.E."/>
            <person name="de Grey A.D.N.J."/>
            <person name="Drysdale R.A."/>
            <person name="Harris N.L."/>
            <person name="Richter J."/>
            <person name="Russo S."/>
            <person name="Schroeder A.J."/>
            <person name="Shu S.Q."/>
            <person name="Stapleton M."/>
            <person name="Yamada C."/>
            <person name="Ashburner M."/>
            <person name="Gelbart W.M."/>
            <person name="Rubin G.M."/>
            <person name="Lewis S.E."/>
        </authorList>
    </citation>
    <scope>GENOME REANNOTATION</scope>
    <source>
        <strain>Berkeley</strain>
    </source>
</reference>
<reference key="3">
    <citation type="journal article" date="2002" name="Genome Biol.">
        <title>A Drosophila full-length cDNA resource.</title>
        <authorList>
            <person name="Stapleton M."/>
            <person name="Carlson J.W."/>
            <person name="Brokstein P."/>
            <person name="Yu C."/>
            <person name="Champe M."/>
            <person name="George R.A."/>
            <person name="Guarin H."/>
            <person name="Kronmiller B."/>
            <person name="Pacleb J.M."/>
            <person name="Park S."/>
            <person name="Wan K.H."/>
            <person name="Rubin G.M."/>
            <person name="Celniker S.E."/>
        </authorList>
    </citation>
    <scope>NUCLEOTIDE SEQUENCE [LARGE SCALE MRNA]</scope>
    <source>
        <strain>Berkeley</strain>
        <tissue>Embryo</tissue>
    </source>
</reference>
<reference key="4">
    <citation type="submission" date="2008-09" db="EMBL/GenBank/DDBJ databases">
        <authorList>
            <person name="Carlson J."/>
            <person name="Booth B."/>
            <person name="Frise E."/>
            <person name="Park S."/>
            <person name="Wan K."/>
            <person name="Yu C."/>
            <person name="Celniker S."/>
        </authorList>
    </citation>
    <scope>NUCLEOTIDE SEQUENCE [LARGE SCALE MRNA]</scope>
</reference>
<reference key="5">
    <citation type="journal article" date="2018" name="Science">
        <title>SFXN1 is a mitochondrial serine transporter required for one-carbon metabolism.</title>
        <authorList>
            <person name="Kory N."/>
            <person name="Wyant G.A."/>
            <person name="Prakash G."/>
            <person name="Uit de Bos J."/>
            <person name="Bottanelli F."/>
            <person name="Pacold M.E."/>
            <person name="Chan S.H."/>
            <person name="Lewis C.A."/>
            <person name="Wang T."/>
            <person name="Keys H.R."/>
            <person name="Guo Y.E."/>
            <person name="Sabatini D.M."/>
        </authorList>
    </citation>
    <scope>FUNCTION</scope>
    <scope>SUBCELLULAR LOCATION</scope>
</reference>
<keyword id="KW-0029">Amino-acid transport</keyword>
<keyword id="KW-0472">Membrane</keyword>
<keyword id="KW-0496">Mitochondrion</keyword>
<keyword id="KW-1185">Reference proteome</keyword>
<keyword id="KW-0812">Transmembrane</keyword>
<keyword id="KW-1133">Transmembrane helix</keyword>
<keyword id="KW-0813">Transport</keyword>
<evidence type="ECO:0000255" key="1"/>
<evidence type="ECO:0000269" key="2">
    <source>
    </source>
</evidence>
<evidence type="ECO:0000305" key="3"/>
<evidence type="ECO:0000305" key="4">
    <source>
    </source>
</evidence>
<evidence type="ECO:0000312" key="5">
    <source>
        <dbReference type="FlyBase" id="FBgn0036843"/>
    </source>
</evidence>
<protein>
    <recommendedName>
        <fullName evidence="3">Sideroflexin-2</fullName>
    </recommendedName>
</protein>
<name>SFXN2_DROME</name>
<organism>
    <name type="scientific">Drosophila melanogaster</name>
    <name type="common">Fruit fly</name>
    <dbReference type="NCBI Taxonomy" id="7227"/>
    <lineage>
        <taxon>Eukaryota</taxon>
        <taxon>Metazoa</taxon>
        <taxon>Ecdysozoa</taxon>
        <taxon>Arthropoda</taxon>
        <taxon>Hexapoda</taxon>
        <taxon>Insecta</taxon>
        <taxon>Pterygota</taxon>
        <taxon>Neoptera</taxon>
        <taxon>Endopterygota</taxon>
        <taxon>Diptera</taxon>
        <taxon>Brachycera</taxon>
        <taxon>Muscomorpha</taxon>
        <taxon>Ephydroidea</taxon>
        <taxon>Drosophilidae</taxon>
        <taxon>Drosophila</taxon>
        <taxon>Sophophora</taxon>
    </lineage>
</organism>
<sequence>MSQVSTLIDVDKPLFDLSTFAGRFQYFAWMTDPRTVVVSSDRLLEAKAMVERYRKGDQSPPLKPEEVHYNMKLYNSAFHPDTGELQNFCGRMSFQVPGGMLITGGMLAFYRTVPAVVLWQFINQSFNAVVNYTNRNANSPTSVTQLGVAYVSATTSALVAAIGCKNYWSKKATPLFQRFVPFAAVAAANFVNIPLMRQNEIINGIEVKNDDGVVVGQSRLAAIKGIGEVVVSRIAMAAPGMLVLPLIMERLEKLPAYRRIKWINAPFQTLLVGCFLCFMVPTACALFPQQCSLDTSIMRTFEPELYEDLEKKTQGKVPKRVYFNKGL</sequence>
<dbReference type="EMBL" id="AE014296">
    <property type="protein sequence ID" value="AAF49194.2"/>
    <property type="molecule type" value="Genomic_DNA"/>
</dbReference>
<dbReference type="EMBL" id="AY071029">
    <property type="protein sequence ID" value="AAL48651.1"/>
    <property type="molecule type" value="mRNA"/>
</dbReference>
<dbReference type="EMBL" id="BT044086">
    <property type="protein sequence ID" value="ACH92151.1"/>
    <property type="molecule type" value="mRNA"/>
</dbReference>
<dbReference type="RefSeq" id="NP_649086.2">
    <property type="nucleotide sequence ID" value="NM_140829.3"/>
</dbReference>
<dbReference type="FunCoup" id="Q9VVW3">
    <property type="interactions" value="504"/>
</dbReference>
<dbReference type="STRING" id="7227.FBpp0074792"/>
<dbReference type="PaxDb" id="7227-FBpp0074792"/>
<dbReference type="DNASU" id="40080"/>
<dbReference type="EnsemblMetazoa" id="FBtr0075025">
    <property type="protein sequence ID" value="FBpp0074792"/>
    <property type="gene ID" value="FBgn0036843"/>
</dbReference>
<dbReference type="GeneID" id="40080"/>
<dbReference type="KEGG" id="dme:Dmel_CG6812"/>
<dbReference type="UCSC" id="CG6812-RA">
    <property type="organism name" value="d. melanogaster"/>
</dbReference>
<dbReference type="AGR" id="FB:FBgn0036843"/>
<dbReference type="CTD" id="118980"/>
<dbReference type="FlyBase" id="FBgn0036843">
    <property type="gene designation" value="Sfxn2"/>
</dbReference>
<dbReference type="VEuPathDB" id="VectorBase:FBgn0036843"/>
<dbReference type="eggNOG" id="KOG3767">
    <property type="taxonomic scope" value="Eukaryota"/>
</dbReference>
<dbReference type="GeneTree" id="ENSGT01030000234641"/>
<dbReference type="HOGENOM" id="CLU_039425_1_0_1"/>
<dbReference type="InParanoid" id="Q9VVW3"/>
<dbReference type="OMA" id="LQRYVPF"/>
<dbReference type="OrthoDB" id="6608471at2759"/>
<dbReference type="PhylomeDB" id="Q9VVW3"/>
<dbReference type="BioGRID-ORCS" id="40080">
    <property type="hits" value="0 hits in 1 CRISPR screen"/>
</dbReference>
<dbReference type="GenomeRNAi" id="40080"/>
<dbReference type="PRO" id="PR:Q9VVW3"/>
<dbReference type="Proteomes" id="UP000000803">
    <property type="component" value="Chromosome 3L"/>
</dbReference>
<dbReference type="Bgee" id="FBgn0036843">
    <property type="expression patterns" value="Expressed in embryonic/larval hemocyte (Drosophila) and 144 other cell types or tissues"/>
</dbReference>
<dbReference type="GO" id="GO:0005743">
    <property type="term" value="C:mitochondrial inner membrane"/>
    <property type="evidence" value="ECO:0000318"/>
    <property type="project" value="GO_Central"/>
</dbReference>
<dbReference type="GO" id="GO:0005739">
    <property type="term" value="C:mitochondrion"/>
    <property type="evidence" value="ECO:0000314"/>
    <property type="project" value="UniProtKB"/>
</dbReference>
<dbReference type="GO" id="GO:0015194">
    <property type="term" value="F:L-serine transmembrane transporter activity"/>
    <property type="evidence" value="ECO:0000314"/>
    <property type="project" value="UniProtKB"/>
</dbReference>
<dbReference type="GO" id="GO:0015075">
    <property type="term" value="F:monoatomic ion transmembrane transporter activity"/>
    <property type="evidence" value="ECO:0007669"/>
    <property type="project" value="InterPro"/>
</dbReference>
<dbReference type="GO" id="GO:0022857">
    <property type="term" value="F:transmembrane transporter activity"/>
    <property type="evidence" value="ECO:0000318"/>
    <property type="project" value="GO_Central"/>
</dbReference>
<dbReference type="GO" id="GO:1990542">
    <property type="term" value="P:mitochondrial transmembrane transport"/>
    <property type="evidence" value="ECO:0000314"/>
    <property type="project" value="UniProtKB"/>
</dbReference>
<dbReference type="GO" id="GO:0006730">
    <property type="term" value="P:one-carbon metabolic process"/>
    <property type="evidence" value="ECO:0000314"/>
    <property type="project" value="UniProtKB"/>
</dbReference>
<dbReference type="GO" id="GO:0140300">
    <property type="term" value="P:serine import into mitochondrion"/>
    <property type="evidence" value="ECO:0000314"/>
    <property type="project" value="UniProtKB"/>
</dbReference>
<dbReference type="InterPro" id="IPR004686">
    <property type="entry name" value="Mtc"/>
</dbReference>
<dbReference type="NCBIfam" id="TIGR00798">
    <property type="entry name" value="mtc"/>
    <property type="match status" value="1"/>
</dbReference>
<dbReference type="PANTHER" id="PTHR11153">
    <property type="entry name" value="SIDEROFLEXIN"/>
    <property type="match status" value="1"/>
</dbReference>
<dbReference type="PANTHER" id="PTHR11153:SF14">
    <property type="entry name" value="SIDEROFLEXIN-2"/>
    <property type="match status" value="1"/>
</dbReference>
<dbReference type="Pfam" id="PF03820">
    <property type="entry name" value="SFXNs"/>
    <property type="match status" value="1"/>
</dbReference>
<comment type="function">
    <text evidence="2">Mitochondrial amino-acid transporter that mediates transport of serine into mitochondria.</text>
</comment>
<comment type="catalytic activity">
    <reaction evidence="4">
        <text>L-serine(in) = L-serine(out)</text>
        <dbReference type="Rhea" id="RHEA:35031"/>
        <dbReference type="ChEBI" id="CHEBI:33384"/>
    </reaction>
</comment>
<comment type="subcellular location">
    <subcellularLocation>
        <location evidence="2">Mitochondrion membrane</location>
        <topology evidence="1">Multi-pass membrane protein</topology>
    </subcellularLocation>
</comment>
<comment type="similarity">
    <text evidence="3">Belongs to the sideroflexin family.</text>
</comment>
<gene>
    <name evidence="5" type="primary">Sfxn2</name>
    <name evidence="5" type="ORF">CG6812</name>
</gene>
<proteinExistence type="evidence at transcript level"/>
<accession>Q9VVW3</accession>
<accession>Q8SZ96</accession>